<protein>
    <recommendedName>
        <fullName>Putative glycosyltransferase ALG1L2</fullName>
        <ecNumber>2.4.1.-</ecNumber>
    </recommendedName>
</protein>
<dbReference type="EC" id="2.4.1.-"/>
<dbReference type="EMBL" id="AC083906">
    <property type="status" value="NOT_ANNOTATED_CDS"/>
    <property type="molecule type" value="Genomic_DNA"/>
</dbReference>
<dbReference type="RefSeq" id="NP_001129624.1">
    <property type="nucleotide sequence ID" value="NM_001136152.1"/>
</dbReference>
<dbReference type="SMR" id="C9J202"/>
<dbReference type="BioGRID" id="570052">
    <property type="interactions" value="3"/>
</dbReference>
<dbReference type="STRING" id="9606.ENSP00000479850"/>
<dbReference type="iPTMnet" id="C9J202"/>
<dbReference type="PhosphoSitePlus" id="C9J202"/>
<dbReference type="BioMuta" id="ALG1L2"/>
<dbReference type="jPOST" id="C9J202"/>
<dbReference type="MassIVE" id="C9J202"/>
<dbReference type="PaxDb" id="9606-ENSP00000479850"/>
<dbReference type="PeptideAtlas" id="C9J202"/>
<dbReference type="ProteomicsDB" id="8145"/>
<dbReference type="Antibodypedia" id="77419">
    <property type="antibodies" value="2 antibodies from 2 providers"/>
</dbReference>
<dbReference type="DNASU" id="644974"/>
<dbReference type="Ensembl" id="ENST00000425059.1">
    <property type="protein sequence ID" value="ENSP00000479850.1"/>
    <property type="gene ID" value="ENSG00000251287.9"/>
</dbReference>
<dbReference type="GeneID" id="644974"/>
<dbReference type="KEGG" id="hsa:644974"/>
<dbReference type="MANE-Select" id="ENST00000425059.1">
    <property type="protein sequence ID" value="ENSP00000479850.1"/>
    <property type="RefSeq nucleotide sequence ID" value="NM_001136152.1"/>
    <property type="RefSeq protein sequence ID" value="NP_001129624.1"/>
</dbReference>
<dbReference type="UCSC" id="uc011bld.2">
    <property type="organism name" value="human"/>
</dbReference>
<dbReference type="AGR" id="HGNC:37258"/>
<dbReference type="CTD" id="644974"/>
<dbReference type="DisGeNET" id="644974"/>
<dbReference type="GeneCards" id="ALG1L2"/>
<dbReference type="HGNC" id="HGNC:37258">
    <property type="gene designation" value="ALG1L2"/>
</dbReference>
<dbReference type="HPA" id="ENSG00000251287">
    <property type="expression patterns" value="Tissue enhanced (retina)"/>
</dbReference>
<dbReference type="neXtProt" id="NX_C9J202"/>
<dbReference type="PharmGKB" id="PA165696819"/>
<dbReference type="VEuPathDB" id="HostDB:ENSG00000251287"/>
<dbReference type="eggNOG" id="KOG2941">
    <property type="taxonomic scope" value="Eukaryota"/>
</dbReference>
<dbReference type="GeneTree" id="ENSGT00390000008647"/>
<dbReference type="HOGENOM" id="CLU_012079_2_1_1"/>
<dbReference type="InParanoid" id="C9J202"/>
<dbReference type="OMA" id="FKEAPLD"/>
<dbReference type="OrthoDB" id="614844at2759"/>
<dbReference type="PAN-GO" id="C9J202">
    <property type="GO annotations" value="3 GO annotations based on evolutionary models"/>
</dbReference>
<dbReference type="PhylomeDB" id="C9J202"/>
<dbReference type="BioGRID-ORCS" id="644974">
    <property type="hits" value="11 hits in 156 CRISPR screens"/>
</dbReference>
<dbReference type="GenomeRNAi" id="644974"/>
<dbReference type="Pharos" id="C9J202">
    <property type="development level" value="Tdark"/>
</dbReference>
<dbReference type="PRO" id="PR:C9J202"/>
<dbReference type="Proteomes" id="UP000005640">
    <property type="component" value="Chromosome 3"/>
</dbReference>
<dbReference type="RNAct" id="C9J202">
    <property type="molecule type" value="protein"/>
</dbReference>
<dbReference type="Bgee" id="ENSG00000251287">
    <property type="expression patterns" value="Expressed in male germ line stem cell (sensu Vertebrata) in testis and 97 other cell types or tissues"/>
</dbReference>
<dbReference type="GO" id="GO:0005783">
    <property type="term" value="C:endoplasmic reticulum"/>
    <property type="evidence" value="ECO:0000318"/>
    <property type="project" value="GO_Central"/>
</dbReference>
<dbReference type="GO" id="GO:0000030">
    <property type="term" value="F:mannosyltransferase activity"/>
    <property type="evidence" value="ECO:0000318"/>
    <property type="project" value="GO_Central"/>
</dbReference>
<dbReference type="GO" id="GO:0006486">
    <property type="term" value="P:protein glycosylation"/>
    <property type="evidence" value="ECO:0000318"/>
    <property type="project" value="GO_Central"/>
</dbReference>
<dbReference type="Gene3D" id="3.40.50.2000">
    <property type="entry name" value="Glycogen Phosphorylase B"/>
    <property type="match status" value="1"/>
</dbReference>
<dbReference type="InterPro" id="IPR026051">
    <property type="entry name" value="ALG1-like"/>
</dbReference>
<dbReference type="InterPro" id="IPR001296">
    <property type="entry name" value="Glyco_trans_1"/>
</dbReference>
<dbReference type="PANTHER" id="PTHR13036">
    <property type="entry name" value="BETA1,4 MANNOSYLTRANSFERASE"/>
    <property type="match status" value="1"/>
</dbReference>
<dbReference type="PANTHER" id="PTHR13036:SF2">
    <property type="entry name" value="GLYCOSYLTRANSFERASE ALG1L2-RELATED"/>
    <property type="match status" value="1"/>
</dbReference>
<dbReference type="Pfam" id="PF00534">
    <property type="entry name" value="Glycos_transf_1"/>
    <property type="match status" value="1"/>
</dbReference>
<dbReference type="SUPFAM" id="SSF53756">
    <property type="entry name" value="UDP-Glycosyltransferase/glycogen phosphorylase"/>
    <property type="match status" value="1"/>
</dbReference>
<evidence type="ECO:0000250" key="1"/>
<evidence type="ECO:0000256" key="2">
    <source>
        <dbReference type="SAM" id="MobiDB-lite"/>
    </source>
</evidence>
<evidence type="ECO:0000305" key="3"/>
<comment type="function">
    <text evidence="1">Putative glycosyltransferase.</text>
</comment>
<comment type="similarity">
    <text evidence="3">Belongs to the glycosyltransferase group 1 family.</text>
</comment>
<sequence length="215" mass="24154">MGATAGWAVTVYDKPASFFKEAPLDLQHRLFMKLGSTHSPFRARSEPEDPDTERSAFTERDSGSGLVTRLHERPALLVSSTSWTEFEQLTLDGQNLPSLVCVITGKGPLREYYSRLIHQKHFQHIQVCIPWLEGRGLPPLLGSVDLDVCLDTSSSGLDLPMKVVDMFRCCLPACAVNFKCLHELVKHEENRLVFEDSEELAAQLQYFADAFLKLS</sequence>
<feature type="chain" id="PRO_0000393966" description="Putative glycosyltransferase ALG1L2">
    <location>
        <begin position="1"/>
        <end position="215"/>
    </location>
</feature>
<feature type="region of interest" description="Disordered" evidence="2">
    <location>
        <begin position="40"/>
        <end position="66"/>
    </location>
</feature>
<feature type="compositionally biased region" description="Basic and acidic residues" evidence="2">
    <location>
        <begin position="43"/>
        <end position="62"/>
    </location>
</feature>
<organism>
    <name type="scientific">Homo sapiens</name>
    <name type="common">Human</name>
    <dbReference type="NCBI Taxonomy" id="9606"/>
    <lineage>
        <taxon>Eukaryota</taxon>
        <taxon>Metazoa</taxon>
        <taxon>Chordata</taxon>
        <taxon>Craniata</taxon>
        <taxon>Vertebrata</taxon>
        <taxon>Euteleostomi</taxon>
        <taxon>Mammalia</taxon>
        <taxon>Eutheria</taxon>
        <taxon>Euarchontoglires</taxon>
        <taxon>Primates</taxon>
        <taxon>Haplorrhini</taxon>
        <taxon>Catarrhini</taxon>
        <taxon>Hominidae</taxon>
        <taxon>Homo</taxon>
    </lineage>
</organism>
<accession>C9J202</accession>
<reference key="1">
    <citation type="journal article" date="2006" name="Nature">
        <title>The DNA sequence, annotation and analysis of human chromosome 3.</title>
        <authorList>
            <person name="Muzny D.M."/>
            <person name="Scherer S.E."/>
            <person name="Kaul R."/>
            <person name="Wang J."/>
            <person name="Yu J."/>
            <person name="Sudbrak R."/>
            <person name="Buhay C.J."/>
            <person name="Chen R."/>
            <person name="Cree A."/>
            <person name="Ding Y."/>
            <person name="Dugan-Rocha S."/>
            <person name="Gill R."/>
            <person name="Gunaratne P."/>
            <person name="Harris R.A."/>
            <person name="Hawes A.C."/>
            <person name="Hernandez J."/>
            <person name="Hodgson A.V."/>
            <person name="Hume J."/>
            <person name="Jackson A."/>
            <person name="Khan Z.M."/>
            <person name="Kovar-Smith C."/>
            <person name="Lewis L.R."/>
            <person name="Lozado R.J."/>
            <person name="Metzker M.L."/>
            <person name="Milosavljevic A."/>
            <person name="Miner G.R."/>
            <person name="Morgan M.B."/>
            <person name="Nazareth L.V."/>
            <person name="Scott G."/>
            <person name="Sodergren E."/>
            <person name="Song X.-Z."/>
            <person name="Steffen D."/>
            <person name="Wei S."/>
            <person name="Wheeler D.A."/>
            <person name="Wright M.W."/>
            <person name="Worley K.C."/>
            <person name="Yuan Y."/>
            <person name="Zhang Z."/>
            <person name="Adams C.Q."/>
            <person name="Ansari-Lari M.A."/>
            <person name="Ayele M."/>
            <person name="Brown M.J."/>
            <person name="Chen G."/>
            <person name="Chen Z."/>
            <person name="Clendenning J."/>
            <person name="Clerc-Blankenburg K.P."/>
            <person name="Chen R."/>
            <person name="Chen Z."/>
            <person name="Davis C."/>
            <person name="Delgado O."/>
            <person name="Dinh H.H."/>
            <person name="Dong W."/>
            <person name="Draper H."/>
            <person name="Ernst S."/>
            <person name="Fu G."/>
            <person name="Gonzalez-Garay M.L."/>
            <person name="Garcia D.K."/>
            <person name="Gillett W."/>
            <person name="Gu J."/>
            <person name="Hao B."/>
            <person name="Haugen E."/>
            <person name="Havlak P."/>
            <person name="He X."/>
            <person name="Hennig S."/>
            <person name="Hu S."/>
            <person name="Huang W."/>
            <person name="Jackson L.R."/>
            <person name="Jacob L.S."/>
            <person name="Kelly S.H."/>
            <person name="Kube M."/>
            <person name="Levy R."/>
            <person name="Li Z."/>
            <person name="Liu B."/>
            <person name="Liu J."/>
            <person name="Liu W."/>
            <person name="Lu J."/>
            <person name="Maheshwari M."/>
            <person name="Nguyen B.-V."/>
            <person name="Okwuonu G.O."/>
            <person name="Palmeiri A."/>
            <person name="Pasternak S."/>
            <person name="Perez L.M."/>
            <person name="Phelps K.A."/>
            <person name="Plopper F.J."/>
            <person name="Qiang B."/>
            <person name="Raymond C."/>
            <person name="Rodriguez R."/>
            <person name="Saenphimmachak C."/>
            <person name="Santibanez J."/>
            <person name="Shen H."/>
            <person name="Shen Y."/>
            <person name="Subramanian S."/>
            <person name="Tabor P.E."/>
            <person name="Verduzco D."/>
            <person name="Waldron L."/>
            <person name="Wang J."/>
            <person name="Wang J."/>
            <person name="Wang Q."/>
            <person name="Williams G.A."/>
            <person name="Wong G.K.-S."/>
            <person name="Yao Z."/>
            <person name="Zhang J."/>
            <person name="Zhang X."/>
            <person name="Zhao G."/>
            <person name="Zhou J."/>
            <person name="Zhou Y."/>
            <person name="Nelson D."/>
            <person name="Lehrach H."/>
            <person name="Reinhardt R."/>
            <person name="Naylor S.L."/>
            <person name="Yang H."/>
            <person name="Olson M."/>
            <person name="Weinstock G."/>
            <person name="Gibbs R.A."/>
        </authorList>
    </citation>
    <scope>NUCLEOTIDE SEQUENCE [LARGE SCALE GENOMIC DNA]</scope>
</reference>
<name>AG1L2_HUMAN</name>
<keyword id="KW-0328">Glycosyltransferase</keyword>
<keyword id="KW-1185">Reference proteome</keyword>
<keyword id="KW-0808">Transferase</keyword>
<gene>
    <name type="primary">ALG1L2</name>
</gene>
<proteinExistence type="inferred from homology"/>